<reference key="1">
    <citation type="journal article" date="2013" name="Biomolecules">
        <title>Pyranose dehydrogenase from Agaricus campestris and Agaricus xanthoderma: Characterization and applications in carbohydrate conversions.</title>
        <authorList>
            <person name="Staudigl P."/>
            <person name="Krondorfer I."/>
            <person name="Haltrich D."/>
            <person name="Peterbauer C.K."/>
        </authorList>
    </citation>
    <scope>NUCLEOTIDE SEQUENCE [MRNA]</scope>
    <scope>FUNCTION</scope>
    <scope>CATALYTIC ACTIVITY</scope>
    <source>
        <strain>CCBAS 225</strain>
    </source>
</reference>
<reference key="2">
    <citation type="journal article" date="2007" name="FEBS J.">
        <title>Properties of pyranose dehydrogenase purified from the litter-degrading fungus Agaricus xanthoderma.</title>
        <authorList>
            <person name="Kujawa M."/>
            <person name="Volc J."/>
            <person name="Halada P."/>
            <person name="Sedmera P."/>
            <person name="Divne C."/>
            <person name="Sygmund C."/>
            <person name="Leitner C."/>
            <person name="Peterbauer C."/>
            <person name="Haltrich D."/>
        </authorList>
    </citation>
    <scope>NUCLEOTIDE SEQUENCE [MRNA] OF 26-600</scope>
    <scope>PROTEIN SEQUENCE OF 26-35</scope>
    <scope>FUNCTION</scope>
    <scope>CATALYTIC ACTIVITY</scope>
    <scope>BIOPHYSICOCHEMICAL PROPERTIES</scope>
    <scope>COFACTOR</scope>
    <scope>SUBCELLULAR LOCATION</scope>
    <scope>SUBUNIT</scope>
    <scope>GLYCOSYLATION</scope>
    <scope>MASS SPECTROMETRY</scope>
    <source>
        <strain>CCBAS 225</strain>
    </source>
</reference>
<accession>V5NC32</accession>
<accession>Q3L1D2</accession>
<proteinExistence type="evidence at protein level"/>
<comment type="function">
    <text evidence="4 5">Catalyzes the single-oxidation or sequential double oxidation reaction of carbohydrates primarily at carbon-2 and/or carbon-3 with the concomitant reduction of the flavin. The enzyme exhibits a broad sugar substrate specificity, oxidizing different aldopyranoses to the corresponding C-1, C-2, C-3 or C-1,2, C-2,3 and C-3,4 (di)dehydro sugars with substrate-specific regioselectivity. Accepts only a narrow range of electron acceptors such as substituted benzoquinones and complexed metal ions and reacts extremely slowly with O(2) as acceptor. May play a role in the natural recycling of plant matter by oxidizing all major monosaccharides in lignocellulose and by reducing quinone compounds or reactive radical species generated during lignin depolymerization.</text>
</comment>
<comment type="catalytic activity">
    <reaction evidence="4 5">
        <text>pyranose + acceptor = pyranos-2-ulose + reduced acceptor.</text>
        <dbReference type="EC" id="1.1.99.29"/>
    </reaction>
</comment>
<comment type="catalytic activity">
    <reaction evidence="4 5">
        <text>pyranose + acceptor = pyranos-3-ulose + reduced acceptor.</text>
        <dbReference type="EC" id="1.1.99.29"/>
    </reaction>
</comment>
<comment type="catalytic activity">
    <reaction evidence="4 5">
        <text>pyranose + acceptor = pyranos-2,3-diulose + reduced acceptor.</text>
        <dbReference type="EC" id="1.1.99.29"/>
    </reaction>
</comment>
<comment type="catalytic activity">
    <reaction evidence="4 5">
        <text>a pyranoside + acceptor = a pyranosid-3-ulose + reduced acceptor.</text>
        <dbReference type="EC" id="1.1.99.29"/>
    </reaction>
</comment>
<comment type="catalytic activity">
    <reaction evidence="4 5">
        <text>a pyranoside + acceptor = a pyranosid-3,4-diulose + reduced acceptor.</text>
        <dbReference type="EC" id="1.1.99.29"/>
    </reaction>
</comment>
<comment type="cofactor">
    <cofactor evidence="4">
        <name>FAD</name>
        <dbReference type="ChEBI" id="CHEBI:57692"/>
    </cofactor>
    <text evidence="4">Binds 1 FAD covalently per subunit.</text>
</comment>
<comment type="biophysicochemical properties">
    <kinetics>
        <KM evidence="4">0.78 mM for D-glucose (with ferricenium ion (Fc(+)) as electron acceptor)</KM>
        <KM evidence="4">11 mM for D-galactose (with ferricenium ion (Fc(+)) as electron acceptor)</KM>
        <KM evidence="4">25 mM for D-xylose (with ferricenium ion (Fc(+)) as electron acceptor)</KM>
        <KM evidence="4">17 mM for L-arabinose (with ferricenium ion (Fc(+)) as electron acceptor)</KM>
        <KM evidence="4">12 mM for maltose (with ferricenium ion (Fc(+)) as electron acceptor)</KM>
        <KM evidence="4">120 mM for lactose (with ferricenium ion (Fc(+)) as electron acceptor)</KM>
        <KM evidence="4">100 mM for maltotriose (with ferricenium ion (Fc(+)) as electron acceptor)</KM>
        <KM evidence="4">17 mM for gentiobiose (with ferricenium ion (Fc(+)) as electron acceptor)</KM>
        <KM evidence="4">1100 uM for 1,4-benzoquinone (at pH 8.0 with D-glucose as substrate)</KM>
        <KM evidence="4">1040 uM for 1,4-benzoquinone (at pH 2.5 with D-glucose as substrate)</KM>
        <KM evidence="4">280 uM for tetrachloro-1,4-benzoquinone (at pH 8.0 with D-glucose as substrate)</KM>
        <KM evidence="4">390 uM for tetrafluoro-1,4-benzoquinone (at pH 9.5 with D-glucose as substrate)</KM>
        <KM evidence="4">120 uM for methyl-1,4-benzoquinone (at pH 7.0 with D-glucose as substrate)</KM>
        <KM evidence="4">180 uM for 2-(hydroxymethyl)-6-methoxy-1,4-benzoquinone (at pH 10 with D-glucose as substrate)</KM>
        <KM evidence="4">20 uM for 3,5-di-tert-butyl-1,2-benzoquinone (at pH 4.0 with D-glucose as substrate)</KM>
        <KM evidence="4">1600 uM for 2-chloro-1,4-benzoquinone (at pH 5.5 with D-glucose as substrate)</KM>
        <KM evidence="4">120 uM for ferricenium (at pH 8.5 with D-glucose as substrate)</KM>
        <KM evidence="4">420 uM for dimethylaminomethyl-ferricenium (at pH 8.0 with D-glucose as substrate)</KM>
        <KM evidence="4">330 uM for ferricyanide (at pH 2.0 with D-glucose as substrate)</KM>
        <KM evidence="4">950 uM for CuSO(4)) (at pH 9.5 with D-glucose as substrate)</KM>
        <KM evidence="4">1.7 uM for azino-bis-(3-ethylbenzthiazolin-6-sulfonic acid (ABTS) cation radical (at pH 2.0 with D-glucose as substrate)</KM>
        <KM evidence="4">50 uM for 2,6-dichloroindophenol (DCIP) (at pH 4.0 with D-glucose as substrate)</KM>
    </kinetics>
    <phDependence>
        <text evidence="4">Optimum pH is 7.5-9 with ferricenium ion (Fc(+)) as electron acceptor. Optimum pH values vary between 2 and 10 depending on the electron acceptor (with D-glucose as substrate).</text>
    </phDependence>
    <temperatureDependence>
        <text evidence="4">Optimum temperature is 75 degrees Celsius with ferricenium ion (Fc(+)) as electron acceptor.</text>
    </temperatureDependence>
</comment>
<comment type="subunit">
    <text evidence="4">Monomer.</text>
</comment>
<comment type="subcellular location">
    <subcellularLocation>
        <location evidence="4">Secreted</location>
    </subcellularLocation>
</comment>
<comment type="PTM">
    <text evidence="4">N-glycosylated.</text>
</comment>
<comment type="mass spectrometry">
    <text>Mass of the N-glycosylated protein.</text>
</comment>
<comment type="similarity">
    <text evidence="8">Belongs to the GMC oxidoreductase family.</text>
</comment>
<dbReference type="EC" id="1.1.99.29" evidence="4 5"/>
<dbReference type="EMBL" id="KF534751">
    <property type="protein sequence ID" value="AHA85314.1"/>
    <property type="molecule type" value="mRNA"/>
</dbReference>
<dbReference type="EMBL" id="AY764147">
    <property type="protein sequence ID" value="AAW92123.1"/>
    <property type="molecule type" value="mRNA"/>
</dbReference>
<dbReference type="SMR" id="V5NC32"/>
<dbReference type="CAZy" id="AA3">
    <property type="family name" value="Auxiliary Activities 3"/>
</dbReference>
<dbReference type="GlyCosmos" id="V5NC32">
    <property type="glycosylation" value="8 sites, No reported glycans"/>
</dbReference>
<dbReference type="BRENDA" id="1.1.99.29">
    <property type="organism ID" value="185"/>
</dbReference>
<dbReference type="GO" id="GO:0005576">
    <property type="term" value="C:extracellular region"/>
    <property type="evidence" value="ECO:0007669"/>
    <property type="project" value="UniProtKB-SubCell"/>
</dbReference>
<dbReference type="GO" id="GO:0050660">
    <property type="term" value="F:flavin adenine dinucleotide binding"/>
    <property type="evidence" value="ECO:0007669"/>
    <property type="project" value="InterPro"/>
</dbReference>
<dbReference type="GO" id="GO:0033718">
    <property type="term" value="F:pyranose dehydrogenase (acceptor) activity"/>
    <property type="evidence" value="ECO:0007669"/>
    <property type="project" value="UniProtKB-EC"/>
</dbReference>
<dbReference type="Gene3D" id="3.50.50.60">
    <property type="entry name" value="FAD/NAD(P)-binding domain"/>
    <property type="match status" value="1"/>
</dbReference>
<dbReference type="Gene3D" id="3.30.560.10">
    <property type="entry name" value="Glucose Oxidase, domain 3"/>
    <property type="match status" value="1"/>
</dbReference>
<dbReference type="InterPro" id="IPR036188">
    <property type="entry name" value="FAD/NAD-bd_sf"/>
</dbReference>
<dbReference type="InterPro" id="IPR012132">
    <property type="entry name" value="GMC_OxRdtase"/>
</dbReference>
<dbReference type="InterPro" id="IPR000172">
    <property type="entry name" value="GMC_OxRdtase_N"/>
</dbReference>
<dbReference type="InterPro" id="IPR007867">
    <property type="entry name" value="GMC_OxRtase_C"/>
</dbReference>
<dbReference type="PANTHER" id="PTHR11552">
    <property type="entry name" value="GLUCOSE-METHANOL-CHOLINE GMC OXIDOREDUCTASE"/>
    <property type="match status" value="1"/>
</dbReference>
<dbReference type="PANTHER" id="PTHR11552:SF201">
    <property type="entry name" value="GLUCOSE-METHANOL-CHOLINE OXIDOREDUCTASE N-TERMINAL DOMAIN-CONTAINING PROTEIN"/>
    <property type="match status" value="1"/>
</dbReference>
<dbReference type="Pfam" id="PF05199">
    <property type="entry name" value="GMC_oxred_C"/>
    <property type="match status" value="1"/>
</dbReference>
<dbReference type="Pfam" id="PF00732">
    <property type="entry name" value="GMC_oxred_N"/>
    <property type="match status" value="1"/>
</dbReference>
<dbReference type="PIRSF" id="PIRSF000137">
    <property type="entry name" value="Alcohol_oxidase"/>
    <property type="match status" value="1"/>
</dbReference>
<dbReference type="SUPFAM" id="SSF54373">
    <property type="entry name" value="FAD-linked reductases, C-terminal domain"/>
    <property type="match status" value="1"/>
</dbReference>
<dbReference type="SUPFAM" id="SSF51905">
    <property type="entry name" value="FAD/NAD(P)-binding domain"/>
    <property type="match status" value="1"/>
</dbReference>
<sequence>MFPRVVRLNSRLVSFALLGLQIANGAITYQHPDDLPSNVNYDFIVAGGGTAGLVVASRLSENSDWNILVIEAGPSNKDTPETRVPGLADSLPGSRTDWNYTTIPQDALGGRSLNYSRAKVLGGCSTHNGMVYTRGSEDDWNYWAEVTGDQALSWDSVLPIMKKAEKFSQDFSDQSVDGHIDPAVHGRDGLLSVVASYTNVSFNDLLLQTTKELSDEFPFKLDLNDGKPHELAWTQYTIDHNAERSSSATSYLETTGDNVHVLVNTHVTRIVSAGNGTNFRSVEFAVDSNSPKKVLQAKKELILSAGVIASPQVLMNSGIGGREELQAIGVDTLIDNPSVGKNLSDQAATLLMFDTTLPNTDYDVAAALTEWDKSRSGPMAHGARLNHLTWVRLPDDKLNGSDPSSGKDSPHIEFQFRQISHQLPPADVPNQVQLPDPDSIGVVLQFSVVNLYSISPGSVILNDNDPFANPMIDLNMFGDQKDIAILREGVRSARRMFSSPAFKDVINGTVYPPADVTSDEDLDAFLRTSAESYWHGVGTLSMSPQNASWGVVNPDFRVKGTSGLRVVDASVIPRAPAGHTQVPVYTFAEHASVLIAASYH</sequence>
<protein>
    <recommendedName>
        <fullName evidence="6">Pyranose dehydrogenase</fullName>
        <shortName evidence="6">PDH</shortName>
        <ecNumber evidence="4 5">1.1.99.29</ecNumber>
    </recommendedName>
    <alternativeName>
        <fullName evidence="2">Pyranose:quinone oxidoreductase 1</fullName>
    </alternativeName>
</protein>
<gene>
    <name evidence="7" type="primary">pdh1</name>
</gene>
<organism>
    <name type="scientific">Agaricus xanthodermus</name>
    <name type="common">Poison yellow meadow mushroom</name>
    <dbReference type="NCBI Taxonomy" id="83518"/>
    <lineage>
        <taxon>Eukaryota</taxon>
        <taxon>Fungi</taxon>
        <taxon>Dikarya</taxon>
        <taxon>Basidiomycota</taxon>
        <taxon>Agaricomycotina</taxon>
        <taxon>Agaricomycetes</taxon>
        <taxon>Agaricomycetidae</taxon>
        <taxon>Agaricales</taxon>
        <taxon>Agaricineae</taxon>
        <taxon>Agaricaceae</taxon>
        <taxon>Agaricus</taxon>
    </lineage>
</organism>
<keyword id="KW-0119">Carbohydrate metabolism</keyword>
<keyword id="KW-0903">Direct protein sequencing</keyword>
<keyword id="KW-0274">FAD</keyword>
<keyword id="KW-0285">Flavoprotein</keyword>
<keyword id="KW-0325">Glycoprotein</keyword>
<keyword id="KW-0560">Oxidoreductase</keyword>
<keyword id="KW-0964">Secreted</keyword>
<keyword id="KW-0732">Signal</keyword>
<feature type="signal peptide" evidence="4">
    <location>
        <begin position="1"/>
        <end position="25"/>
    </location>
</feature>
<feature type="chain" id="PRO_0000431290" description="Pyranose dehydrogenase">
    <location>
        <begin position="26"/>
        <end position="600"/>
    </location>
</feature>
<feature type="active site" description="Proton acceptor" evidence="1">
    <location>
        <position position="535"/>
    </location>
</feature>
<feature type="active site" evidence="2">
    <location>
        <position position="579"/>
    </location>
</feature>
<feature type="modified residue" description="Tele-8alpha-FAD histidine" evidence="2">
    <location>
        <position position="127"/>
    </location>
</feature>
<feature type="glycosylation site" description="N-linked (GlcNAc...) asparagine" evidence="3">
    <location>
        <position position="99"/>
    </location>
</feature>
<feature type="glycosylation site" description="N-linked (GlcNAc...) asparagine" evidence="3">
    <location>
        <position position="114"/>
    </location>
</feature>
<feature type="glycosylation site" description="N-linked (GlcNAc...) asparagine" evidence="3">
    <location>
        <position position="199"/>
    </location>
</feature>
<feature type="glycosylation site" description="N-linked (GlcNAc...) asparagine" evidence="3">
    <location>
        <position position="275"/>
    </location>
</feature>
<feature type="glycosylation site" description="N-linked (GlcNAc...) asparagine" evidence="3">
    <location>
        <position position="342"/>
    </location>
</feature>
<feature type="glycosylation site" description="N-linked (GlcNAc...) asparagine" evidence="3">
    <location>
        <position position="399"/>
    </location>
</feature>
<feature type="glycosylation site" description="N-linked (GlcNAc...) asparagine" evidence="3">
    <location>
        <position position="507"/>
    </location>
</feature>
<feature type="glycosylation site" description="N-linked (GlcNAc...) asparagine" evidence="3">
    <location>
        <position position="546"/>
    </location>
</feature>
<feature type="sequence conflict" description="In Ref. 2; AAW92123." ref="2">
    <original>Y</original>
    <variation>H</variation>
    <location>
        <position position="197"/>
    </location>
</feature>
<feature type="sequence conflict" description="In Ref. 2; AAW92123." ref="2">
    <original>G</original>
    <variation>R</variation>
    <location>
        <position position="441"/>
    </location>
</feature>
<name>PDH1_AGAXA</name>
<evidence type="ECO:0000250" key="1">
    <source>
        <dbReference type="UniProtKB" id="E4QP00"/>
    </source>
</evidence>
<evidence type="ECO:0000250" key="2">
    <source>
        <dbReference type="UniProtKB" id="Q3L245"/>
    </source>
</evidence>
<evidence type="ECO:0000255" key="3">
    <source>
        <dbReference type="PROSITE-ProRule" id="PRU00498"/>
    </source>
</evidence>
<evidence type="ECO:0000269" key="4">
    <source>
    </source>
</evidence>
<evidence type="ECO:0000269" key="5">
    <source>
    </source>
</evidence>
<evidence type="ECO:0000303" key="6">
    <source>
    </source>
</evidence>
<evidence type="ECO:0000303" key="7">
    <source>
    </source>
</evidence>
<evidence type="ECO:0000305" key="8"/>